<name>NADE_SHEB5</name>
<comment type="function">
    <text evidence="1">Catalyzes the ATP-dependent amidation of deamido-NAD to form NAD. Uses ammonia as a nitrogen source.</text>
</comment>
<comment type="catalytic activity">
    <reaction evidence="1">
        <text>deamido-NAD(+) + NH4(+) + ATP = AMP + diphosphate + NAD(+) + H(+)</text>
        <dbReference type="Rhea" id="RHEA:21188"/>
        <dbReference type="ChEBI" id="CHEBI:15378"/>
        <dbReference type="ChEBI" id="CHEBI:28938"/>
        <dbReference type="ChEBI" id="CHEBI:30616"/>
        <dbReference type="ChEBI" id="CHEBI:33019"/>
        <dbReference type="ChEBI" id="CHEBI:57540"/>
        <dbReference type="ChEBI" id="CHEBI:58437"/>
        <dbReference type="ChEBI" id="CHEBI:456215"/>
        <dbReference type="EC" id="6.3.1.5"/>
    </reaction>
</comment>
<comment type="pathway">
    <text evidence="1">Cofactor biosynthesis; NAD(+) biosynthesis; NAD(+) from deamido-NAD(+) (ammonia route): step 1/1.</text>
</comment>
<comment type="subunit">
    <text evidence="1">Homodimer.</text>
</comment>
<comment type="similarity">
    <text evidence="1">Belongs to the NAD synthetase family.</text>
</comment>
<keyword id="KW-0067">ATP-binding</keyword>
<keyword id="KW-0436">Ligase</keyword>
<keyword id="KW-0460">Magnesium</keyword>
<keyword id="KW-0479">Metal-binding</keyword>
<keyword id="KW-0520">NAD</keyword>
<keyword id="KW-0547">Nucleotide-binding</keyword>
<keyword id="KW-1185">Reference proteome</keyword>
<evidence type="ECO:0000255" key="1">
    <source>
        <dbReference type="HAMAP-Rule" id="MF_00193"/>
    </source>
</evidence>
<accession>A3D5M3</accession>
<proteinExistence type="inferred from homology"/>
<gene>
    <name evidence="1" type="primary">nadE</name>
    <name type="ordered locus">Sbal_2543</name>
</gene>
<reference key="1">
    <citation type="submission" date="2007-02" db="EMBL/GenBank/DDBJ databases">
        <title>Complete sequence of chromosome of Shewanella baltica OS155.</title>
        <authorList>
            <consortium name="US DOE Joint Genome Institute"/>
            <person name="Copeland A."/>
            <person name="Lucas S."/>
            <person name="Lapidus A."/>
            <person name="Barry K."/>
            <person name="Detter J.C."/>
            <person name="Glavina del Rio T."/>
            <person name="Hammon N."/>
            <person name="Israni S."/>
            <person name="Dalin E."/>
            <person name="Tice H."/>
            <person name="Pitluck S."/>
            <person name="Sims D.R."/>
            <person name="Brettin T."/>
            <person name="Bruce D."/>
            <person name="Han C."/>
            <person name="Tapia R."/>
            <person name="Brainard J."/>
            <person name="Schmutz J."/>
            <person name="Larimer F."/>
            <person name="Land M."/>
            <person name="Hauser L."/>
            <person name="Kyrpides N."/>
            <person name="Mikhailova N."/>
            <person name="Brettar I."/>
            <person name="Klappenbach J."/>
            <person name="Konstantinidis K."/>
            <person name="Rodrigues J."/>
            <person name="Tiedje J."/>
            <person name="Richardson P."/>
        </authorList>
    </citation>
    <scope>NUCLEOTIDE SEQUENCE [LARGE SCALE GENOMIC DNA]</scope>
    <source>
        <strain>OS155 / ATCC BAA-1091</strain>
    </source>
</reference>
<organism>
    <name type="scientific">Shewanella baltica (strain OS155 / ATCC BAA-1091)</name>
    <dbReference type="NCBI Taxonomy" id="325240"/>
    <lineage>
        <taxon>Bacteria</taxon>
        <taxon>Pseudomonadati</taxon>
        <taxon>Pseudomonadota</taxon>
        <taxon>Gammaproteobacteria</taxon>
        <taxon>Alteromonadales</taxon>
        <taxon>Shewanellaceae</taxon>
        <taxon>Shewanella</taxon>
    </lineage>
</organism>
<dbReference type="EC" id="6.3.1.5" evidence="1"/>
<dbReference type="EMBL" id="CP000563">
    <property type="protein sequence ID" value="ABN62036.1"/>
    <property type="molecule type" value="Genomic_DNA"/>
</dbReference>
<dbReference type="RefSeq" id="WP_006086216.1">
    <property type="nucleotide sequence ID" value="NC_009052.1"/>
</dbReference>
<dbReference type="SMR" id="A3D5M3"/>
<dbReference type="STRING" id="325240.Sbal_2543"/>
<dbReference type="GeneID" id="11772748"/>
<dbReference type="KEGG" id="sbl:Sbal_2543"/>
<dbReference type="HOGENOM" id="CLU_059327_3_0_6"/>
<dbReference type="OrthoDB" id="3266517at2"/>
<dbReference type="UniPathway" id="UPA00253">
    <property type="reaction ID" value="UER00333"/>
</dbReference>
<dbReference type="Proteomes" id="UP000001557">
    <property type="component" value="Chromosome"/>
</dbReference>
<dbReference type="GO" id="GO:0005737">
    <property type="term" value="C:cytoplasm"/>
    <property type="evidence" value="ECO:0007669"/>
    <property type="project" value="InterPro"/>
</dbReference>
<dbReference type="GO" id="GO:0005524">
    <property type="term" value="F:ATP binding"/>
    <property type="evidence" value="ECO:0007669"/>
    <property type="project" value="UniProtKB-UniRule"/>
</dbReference>
<dbReference type="GO" id="GO:0004359">
    <property type="term" value="F:glutaminase activity"/>
    <property type="evidence" value="ECO:0007669"/>
    <property type="project" value="InterPro"/>
</dbReference>
<dbReference type="GO" id="GO:0046872">
    <property type="term" value="F:metal ion binding"/>
    <property type="evidence" value="ECO:0007669"/>
    <property type="project" value="UniProtKB-KW"/>
</dbReference>
<dbReference type="GO" id="GO:0003952">
    <property type="term" value="F:NAD+ synthase (glutamine-hydrolyzing) activity"/>
    <property type="evidence" value="ECO:0007669"/>
    <property type="project" value="InterPro"/>
</dbReference>
<dbReference type="GO" id="GO:0008795">
    <property type="term" value="F:NAD+ synthase activity"/>
    <property type="evidence" value="ECO:0007669"/>
    <property type="project" value="UniProtKB-UniRule"/>
</dbReference>
<dbReference type="GO" id="GO:0009435">
    <property type="term" value="P:NAD biosynthetic process"/>
    <property type="evidence" value="ECO:0007669"/>
    <property type="project" value="UniProtKB-UniRule"/>
</dbReference>
<dbReference type="CDD" id="cd00553">
    <property type="entry name" value="NAD_synthase"/>
    <property type="match status" value="1"/>
</dbReference>
<dbReference type="FunFam" id="3.40.50.620:FF:000015">
    <property type="entry name" value="NH(3)-dependent NAD(+) synthetase"/>
    <property type="match status" value="1"/>
</dbReference>
<dbReference type="Gene3D" id="3.40.50.620">
    <property type="entry name" value="HUPs"/>
    <property type="match status" value="1"/>
</dbReference>
<dbReference type="HAMAP" id="MF_00193">
    <property type="entry name" value="NadE_ammonia_dep"/>
    <property type="match status" value="1"/>
</dbReference>
<dbReference type="InterPro" id="IPR022310">
    <property type="entry name" value="NAD/GMP_synthase"/>
</dbReference>
<dbReference type="InterPro" id="IPR003694">
    <property type="entry name" value="NAD_synthase"/>
</dbReference>
<dbReference type="InterPro" id="IPR022926">
    <property type="entry name" value="NH(3)-dep_NAD(+)_synth"/>
</dbReference>
<dbReference type="InterPro" id="IPR014729">
    <property type="entry name" value="Rossmann-like_a/b/a_fold"/>
</dbReference>
<dbReference type="NCBIfam" id="TIGR00552">
    <property type="entry name" value="nadE"/>
    <property type="match status" value="1"/>
</dbReference>
<dbReference type="NCBIfam" id="NF001979">
    <property type="entry name" value="PRK00768.1"/>
    <property type="match status" value="1"/>
</dbReference>
<dbReference type="PANTHER" id="PTHR23090">
    <property type="entry name" value="NH 3 /GLUTAMINE-DEPENDENT NAD + SYNTHETASE"/>
    <property type="match status" value="1"/>
</dbReference>
<dbReference type="PANTHER" id="PTHR23090:SF7">
    <property type="entry name" value="NH(3)-DEPENDENT NAD(+) SYNTHETASE"/>
    <property type="match status" value="1"/>
</dbReference>
<dbReference type="Pfam" id="PF02540">
    <property type="entry name" value="NAD_synthase"/>
    <property type="match status" value="1"/>
</dbReference>
<dbReference type="SUPFAM" id="SSF52402">
    <property type="entry name" value="Adenine nucleotide alpha hydrolases-like"/>
    <property type="match status" value="1"/>
</dbReference>
<protein>
    <recommendedName>
        <fullName evidence="1">NH(3)-dependent NAD(+) synthetase</fullName>
        <ecNumber evidence="1">6.3.1.5</ecNumber>
    </recommendedName>
</protein>
<feature type="chain" id="PRO_1000077598" description="NH(3)-dependent NAD(+) synthetase">
    <location>
        <begin position="1"/>
        <end position="276"/>
    </location>
</feature>
<feature type="binding site" evidence="1">
    <location>
        <begin position="43"/>
        <end position="50"/>
    </location>
    <ligand>
        <name>ATP</name>
        <dbReference type="ChEBI" id="CHEBI:30616"/>
    </ligand>
</feature>
<feature type="binding site" evidence="1">
    <location>
        <position position="49"/>
    </location>
    <ligand>
        <name>Mg(2+)</name>
        <dbReference type="ChEBI" id="CHEBI:18420"/>
    </ligand>
</feature>
<feature type="binding site" evidence="1">
    <location>
        <position position="146"/>
    </location>
    <ligand>
        <name>deamido-NAD(+)</name>
        <dbReference type="ChEBI" id="CHEBI:58437"/>
    </ligand>
</feature>
<feature type="binding site" evidence="1">
    <location>
        <position position="166"/>
    </location>
    <ligand>
        <name>ATP</name>
        <dbReference type="ChEBI" id="CHEBI:30616"/>
    </ligand>
</feature>
<feature type="binding site" evidence="1">
    <location>
        <position position="171"/>
    </location>
    <ligand>
        <name>Mg(2+)</name>
        <dbReference type="ChEBI" id="CHEBI:18420"/>
    </ligand>
</feature>
<feature type="binding site" evidence="1">
    <location>
        <position position="179"/>
    </location>
    <ligand>
        <name>deamido-NAD(+)</name>
        <dbReference type="ChEBI" id="CHEBI:58437"/>
    </ligand>
</feature>
<feature type="binding site" evidence="1">
    <location>
        <position position="186"/>
    </location>
    <ligand>
        <name>deamido-NAD(+)</name>
        <dbReference type="ChEBI" id="CHEBI:58437"/>
    </ligand>
</feature>
<feature type="binding site" evidence="1">
    <location>
        <position position="195"/>
    </location>
    <ligand>
        <name>ATP</name>
        <dbReference type="ChEBI" id="CHEBI:30616"/>
    </ligand>
</feature>
<feature type="binding site" evidence="1">
    <location>
        <position position="217"/>
    </location>
    <ligand>
        <name>ATP</name>
        <dbReference type="ChEBI" id="CHEBI:30616"/>
    </ligand>
</feature>
<feature type="binding site" evidence="1">
    <location>
        <begin position="266"/>
        <end position="267"/>
    </location>
    <ligand>
        <name>deamido-NAD(+)</name>
        <dbReference type="ChEBI" id="CHEBI:58437"/>
    </ligand>
</feature>
<sequence length="276" mass="30016">MKAQILREMKVLTAIEPEFEVQRRVAFIKTKLKEARSKALVLGISGGVDSSTAGRLCQLAVDSLNHENSQGGYQFIAVRLPYQIQKDEHEAQLACQFIQPSKLVTVNVHQGVDGVHSATVAALAEAGLPLPDVAKVDFVKGNVKARMRMIAQYELAGLVGGLVVGTDHSAENITGFYTKWGDGACDLAPLFGLNKRQVRQLAAYLGAPESLVHKAPTADLEDNKPLLEDEVALGLTYAQIDDFLEGKDVGKAVEDKLIGIYKATQHKRQPIPTIYD</sequence>